<gene>
    <name evidence="1" type="primary">aat</name>
    <name type="ordered locus">Swoo_2696</name>
</gene>
<evidence type="ECO:0000255" key="1">
    <source>
        <dbReference type="HAMAP-Rule" id="MF_00688"/>
    </source>
</evidence>
<keyword id="KW-0012">Acyltransferase</keyword>
<keyword id="KW-0963">Cytoplasm</keyword>
<keyword id="KW-1185">Reference proteome</keyword>
<keyword id="KW-0808">Transferase</keyword>
<name>LFTR_SHEWM</name>
<feature type="chain" id="PRO_1000131953" description="Leucyl/phenylalanyl-tRNA--protein transferase">
    <location>
        <begin position="1"/>
        <end position="236"/>
    </location>
</feature>
<accession>B1KIC1</accession>
<protein>
    <recommendedName>
        <fullName evidence="1">Leucyl/phenylalanyl-tRNA--protein transferase</fullName>
        <ecNumber evidence="1">2.3.2.6</ecNumber>
    </recommendedName>
    <alternativeName>
        <fullName evidence="1">L/F-transferase</fullName>
    </alternativeName>
    <alternativeName>
        <fullName evidence="1">Leucyltransferase</fullName>
    </alternativeName>
    <alternativeName>
        <fullName evidence="1">Phenyalanyltransferase</fullName>
    </alternativeName>
</protein>
<dbReference type="EC" id="2.3.2.6" evidence="1"/>
<dbReference type="EMBL" id="CP000961">
    <property type="protein sequence ID" value="ACA86972.1"/>
    <property type="molecule type" value="Genomic_DNA"/>
</dbReference>
<dbReference type="RefSeq" id="WP_012325311.1">
    <property type="nucleotide sequence ID" value="NC_010506.1"/>
</dbReference>
<dbReference type="SMR" id="B1KIC1"/>
<dbReference type="STRING" id="392500.Swoo_2696"/>
<dbReference type="KEGG" id="swd:Swoo_2696"/>
<dbReference type="eggNOG" id="COG2360">
    <property type="taxonomic scope" value="Bacteria"/>
</dbReference>
<dbReference type="HOGENOM" id="CLU_075045_0_0_6"/>
<dbReference type="Proteomes" id="UP000002168">
    <property type="component" value="Chromosome"/>
</dbReference>
<dbReference type="GO" id="GO:0005737">
    <property type="term" value="C:cytoplasm"/>
    <property type="evidence" value="ECO:0007669"/>
    <property type="project" value="UniProtKB-SubCell"/>
</dbReference>
<dbReference type="GO" id="GO:0008914">
    <property type="term" value="F:leucyl-tRNA--protein transferase activity"/>
    <property type="evidence" value="ECO:0007669"/>
    <property type="project" value="UniProtKB-UniRule"/>
</dbReference>
<dbReference type="GO" id="GO:0030163">
    <property type="term" value="P:protein catabolic process"/>
    <property type="evidence" value="ECO:0007669"/>
    <property type="project" value="UniProtKB-UniRule"/>
</dbReference>
<dbReference type="FunFam" id="3.30.70.3550:FF:000001">
    <property type="entry name" value="Leucyl/phenylalanyl-tRNA--protein transferase"/>
    <property type="match status" value="1"/>
</dbReference>
<dbReference type="FunFam" id="3.40.630.70:FF:000001">
    <property type="entry name" value="Leucyl/phenylalanyl-tRNA--protein transferase"/>
    <property type="match status" value="1"/>
</dbReference>
<dbReference type="Gene3D" id="3.40.630.70">
    <property type="entry name" value="Leucyl/phenylalanyl-tRNA-protein transferase, C-terminal domain"/>
    <property type="match status" value="1"/>
</dbReference>
<dbReference type="Gene3D" id="3.30.70.3550">
    <property type="entry name" value="Leucyl/phenylalanyl-tRNA-protein transferase, N-terminal domain"/>
    <property type="match status" value="1"/>
</dbReference>
<dbReference type="HAMAP" id="MF_00688">
    <property type="entry name" value="Leu_Phe_trans"/>
    <property type="match status" value="1"/>
</dbReference>
<dbReference type="InterPro" id="IPR016181">
    <property type="entry name" value="Acyl_CoA_acyltransferase"/>
</dbReference>
<dbReference type="InterPro" id="IPR004616">
    <property type="entry name" value="Leu/Phe-tRNA_Trfase"/>
</dbReference>
<dbReference type="InterPro" id="IPR042203">
    <property type="entry name" value="Leu/Phe-tRNA_Trfase_C"/>
</dbReference>
<dbReference type="InterPro" id="IPR042221">
    <property type="entry name" value="Leu/Phe-tRNA_Trfase_N"/>
</dbReference>
<dbReference type="NCBIfam" id="TIGR00667">
    <property type="entry name" value="aat"/>
    <property type="match status" value="1"/>
</dbReference>
<dbReference type="PANTHER" id="PTHR30098">
    <property type="entry name" value="LEUCYL/PHENYLALANYL-TRNA--PROTEIN TRANSFERASE"/>
    <property type="match status" value="1"/>
</dbReference>
<dbReference type="PANTHER" id="PTHR30098:SF2">
    <property type="entry name" value="LEUCYL_PHENYLALANYL-TRNA--PROTEIN TRANSFERASE"/>
    <property type="match status" value="1"/>
</dbReference>
<dbReference type="Pfam" id="PF03588">
    <property type="entry name" value="Leu_Phe_trans"/>
    <property type="match status" value="1"/>
</dbReference>
<dbReference type="SUPFAM" id="SSF55729">
    <property type="entry name" value="Acyl-CoA N-acyltransferases (Nat)"/>
    <property type="match status" value="1"/>
</dbReference>
<reference key="1">
    <citation type="submission" date="2008-02" db="EMBL/GenBank/DDBJ databases">
        <title>Complete sequence of Shewanella woodyi ATCC 51908.</title>
        <authorList>
            <consortium name="US DOE Joint Genome Institute"/>
            <person name="Copeland A."/>
            <person name="Lucas S."/>
            <person name="Lapidus A."/>
            <person name="Glavina del Rio T."/>
            <person name="Dalin E."/>
            <person name="Tice H."/>
            <person name="Bruce D."/>
            <person name="Goodwin L."/>
            <person name="Pitluck S."/>
            <person name="Sims D."/>
            <person name="Brettin T."/>
            <person name="Detter J.C."/>
            <person name="Han C."/>
            <person name="Kuske C.R."/>
            <person name="Schmutz J."/>
            <person name="Larimer F."/>
            <person name="Land M."/>
            <person name="Hauser L."/>
            <person name="Kyrpides N."/>
            <person name="Lykidis A."/>
            <person name="Zhao J.-S."/>
            <person name="Richardson P."/>
        </authorList>
    </citation>
    <scope>NUCLEOTIDE SEQUENCE [LARGE SCALE GENOMIC DNA]</scope>
    <source>
        <strain>ATCC 51908 / MS32</strain>
    </source>
</reference>
<organism>
    <name type="scientific">Shewanella woodyi (strain ATCC 51908 / MS32)</name>
    <dbReference type="NCBI Taxonomy" id="392500"/>
    <lineage>
        <taxon>Bacteria</taxon>
        <taxon>Pseudomonadati</taxon>
        <taxon>Pseudomonadota</taxon>
        <taxon>Gammaproteobacteria</taxon>
        <taxon>Alteromonadales</taxon>
        <taxon>Shewanellaceae</taxon>
        <taxon>Shewanella</taxon>
    </lineage>
</organism>
<sequence length="236" mass="26644">MNSLSYLNHELEQFPSPEFALTDPNGLLAVGGDLQPKRLLNAYYEGIFPWFNIDDPILWWSPDPRAVFVPGNMKTSRSLLKHLKKQPWRYSINHAFSQVIEGCAAPRSSQDGTWITPEIQDAYLKLHELGKAHSIEVWHQDELIGGLYGLATGQVFCGESMFHTQTNASKAAMLLLHQHLLKQGFKLIDAQVMNPHLASLGATALRRKDFINLLKRFRDLPVAADAWARSEVSLEL</sequence>
<proteinExistence type="inferred from homology"/>
<comment type="function">
    <text evidence="1">Functions in the N-end rule pathway of protein degradation where it conjugates Leu, Phe and, less efficiently, Met from aminoacyl-tRNAs to the N-termini of proteins containing an N-terminal arginine or lysine.</text>
</comment>
<comment type="catalytic activity">
    <reaction evidence="1">
        <text>N-terminal L-lysyl-[protein] + L-leucyl-tRNA(Leu) = N-terminal L-leucyl-L-lysyl-[protein] + tRNA(Leu) + H(+)</text>
        <dbReference type="Rhea" id="RHEA:12340"/>
        <dbReference type="Rhea" id="RHEA-COMP:9613"/>
        <dbReference type="Rhea" id="RHEA-COMP:9622"/>
        <dbReference type="Rhea" id="RHEA-COMP:12670"/>
        <dbReference type="Rhea" id="RHEA-COMP:12671"/>
        <dbReference type="ChEBI" id="CHEBI:15378"/>
        <dbReference type="ChEBI" id="CHEBI:65249"/>
        <dbReference type="ChEBI" id="CHEBI:78442"/>
        <dbReference type="ChEBI" id="CHEBI:78494"/>
        <dbReference type="ChEBI" id="CHEBI:133043"/>
        <dbReference type="EC" id="2.3.2.6"/>
    </reaction>
</comment>
<comment type="catalytic activity">
    <reaction evidence="1">
        <text>N-terminal L-arginyl-[protein] + L-leucyl-tRNA(Leu) = N-terminal L-leucyl-L-arginyl-[protein] + tRNA(Leu) + H(+)</text>
        <dbReference type="Rhea" id="RHEA:50416"/>
        <dbReference type="Rhea" id="RHEA-COMP:9613"/>
        <dbReference type="Rhea" id="RHEA-COMP:9622"/>
        <dbReference type="Rhea" id="RHEA-COMP:12672"/>
        <dbReference type="Rhea" id="RHEA-COMP:12673"/>
        <dbReference type="ChEBI" id="CHEBI:15378"/>
        <dbReference type="ChEBI" id="CHEBI:64719"/>
        <dbReference type="ChEBI" id="CHEBI:78442"/>
        <dbReference type="ChEBI" id="CHEBI:78494"/>
        <dbReference type="ChEBI" id="CHEBI:133044"/>
        <dbReference type="EC" id="2.3.2.6"/>
    </reaction>
</comment>
<comment type="catalytic activity">
    <reaction evidence="1">
        <text>L-phenylalanyl-tRNA(Phe) + an N-terminal L-alpha-aminoacyl-[protein] = an N-terminal L-phenylalanyl-L-alpha-aminoacyl-[protein] + tRNA(Phe)</text>
        <dbReference type="Rhea" id="RHEA:43632"/>
        <dbReference type="Rhea" id="RHEA-COMP:9668"/>
        <dbReference type="Rhea" id="RHEA-COMP:9699"/>
        <dbReference type="Rhea" id="RHEA-COMP:10636"/>
        <dbReference type="Rhea" id="RHEA-COMP:10637"/>
        <dbReference type="ChEBI" id="CHEBI:78442"/>
        <dbReference type="ChEBI" id="CHEBI:78531"/>
        <dbReference type="ChEBI" id="CHEBI:78597"/>
        <dbReference type="ChEBI" id="CHEBI:83561"/>
        <dbReference type="EC" id="2.3.2.6"/>
    </reaction>
</comment>
<comment type="subcellular location">
    <subcellularLocation>
        <location evidence="1">Cytoplasm</location>
    </subcellularLocation>
</comment>
<comment type="similarity">
    <text evidence="1">Belongs to the L/F-transferase family.</text>
</comment>